<protein>
    <recommendedName>
        <fullName>Chitin synthase 1</fullName>
        <ecNumber>2.4.1.16</ecNumber>
    </recommendedName>
    <alternativeName>
        <fullName>Chitin-UDP acetyl-glucosaminyl transferase 1</fullName>
    </alternativeName>
</protein>
<feature type="chain" id="PRO_0000193715" description="Chitin synthase 1">
    <location>
        <begin position="1" status="less than"/>
        <end position="189" status="greater than"/>
    </location>
</feature>
<feature type="non-terminal residue">
    <location>
        <position position="1"/>
    </location>
</feature>
<feature type="non-terminal residue">
    <location>
        <position position="189"/>
    </location>
</feature>
<gene>
    <name type="primary">CHS1</name>
</gene>
<sequence length="189" mass="21041">EELFCRTMHGVIKNIAHLCKRDRSKTWGKEGWKKVVVCIVSDGRQKINSRTLSVIAAMGRHQDGIAKNVVNKKPVTAHIYEYTTQITVTPSMKIEGAERGTMPVQLIFCLKEKNQKKINSHRWFFNAFGPILQPNVCVLLDVGTMPGPTSIYHLWKAFDINSNVGGACGEIVALKGKWGLNLLNPLVAA</sequence>
<reference key="1">
    <citation type="journal article" date="1992" name="Proc. Natl. Acad. Sci. U.S.A.">
        <title>Classification of fungal chitin synthases.</title>
        <authorList>
            <person name="Bowen A.R."/>
            <person name="Chen-Wu J.L.-P."/>
            <person name="Momany M."/>
            <person name="Young R."/>
            <person name="Szaniszlo P.J."/>
            <person name="Robbins P.W."/>
        </authorList>
    </citation>
    <scope>NUCLEOTIDE SEQUENCE [GENOMIC DNA]</scope>
</reference>
<proteinExistence type="inferred from homology"/>
<keyword id="KW-1003">Cell membrane</keyword>
<keyword id="KW-0961">Cell wall biogenesis/degradation</keyword>
<keyword id="KW-0328">Glycosyltransferase</keyword>
<keyword id="KW-0472">Membrane</keyword>
<keyword id="KW-0808">Transferase</keyword>
<keyword id="KW-0812">Transmembrane</keyword>
<comment type="function">
    <text evidence="1">Polymerizes chitin, a structural polymer of the cell wall and septum, by transferring the sugar moiety of UDP-GlcNAc to the non-reducing end of the growing chitin polymer.</text>
</comment>
<comment type="catalytic activity">
    <reaction>
        <text>[(1-&gt;4)-N-acetyl-beta-D-glucosaminyl](n) + UDP-N-acetyl-alpha-D-glucosamine = [(1-&gt;4)-N-acetyl-beta-D-glucosaminyl](n+1) + UDP + H(+)</text>
        <dbReference type="Rhea" id="RHEA:16637"/>
        <dbReference type="Rhea" id="RHEA-COMP:9593"/>
        <dbReference type="Rhea" id="RHEA-COMP:9595"/>
        <dbReference type="ChEBI" id="CHEBI:15378"/>
        <dbReference type="ChEBI" id="CHEBI:17029"/>
        <dbReference type="ChEBI" id="CHEBI:57705"/>
        <dbReference type="ChEBI" id="CHEBI:58223"/>
        <dbReference type="EC" id="2.4.1.16"/>
    </reaction>
</comment>
<comment type="subcellular location">
    <subcellularLocation>
        <location evidence="1">Cell membrane</location>
        <topology evidence="1">Multi-pass membrane protein</topology>
    </subcellularLocation>
</comment>
<comment type="similarity">
    <text evidence="1">Belongs to the chitin synthase family.</text>
</comment>
<dbReference type="EC" id="2.4.1.16"/>
<dbReference type="EMBL" id="M82956">
    <property type="protein sequence ID" value="AAA33924.1"/>
    <property type="molecule type" value="Genomic_DNA"/>
</dbReference>
<dbReference type="PIR" id="I45188">
    <property type="entry name" value="I45188"/>
</dbReference>
<dbReference type="SMR" id="P30596"/>
<dbReference type="CAZy" id="GT2">
    <property type="family name" value="Glycosyltransferase Family 2"/>
</dbReference>
<dbReference type="VEuPathDB" id="FungiDB:SCHCODRAFT_02621601"/>
<dbReference type="GO" id="GO:0030428">
    <property type="term" value="C:cell septum"/>
    <property type="evidence" value="ECO:0007669"/>
    <property type="project" value="TreeGrafter"/>
</dbReference>
<dbReference type="GO" id="GO:0005886">
    <property type="term" value="C:plasma membrane"/>
    <property type="evidence" value="ECO:0007669"/>
    <property type="project" value="UniProtKB-SubCell"/>
</dbReference>
<dbReference type="GO" id="GO:0004100">
    <property type="term" value="F:chitin synthase activity"/>
    <property type="evidence" value="ECO:0007669"/>
    <property type="project" value="UniProtKB-EC"/>
</dbReference>
<dbReference type="GO" id="GO:0071555">
    <property type="term" value="P:cell wall organization"/>
    <property type="evidence" value="ECO:0007669"/>
    <property type="project" value="UniProtKB-KW"/>
</dbReference>
<dbReference type="GO" id="GO:0006031">
    <property type="term" value="P:chitin biosynthetic process"/>
    <property type="evidence" value="ECO:0007669"/>
    <property type="project" value="InterPro"/>
</dbReference>
<dbReference type="InterPro" id="IPR004835">
    <property type="entry name" value="Chitin_synth"/>
</dbReference>
<dbReference type="InterPro" id="IPR004834">
    <property type="entry name" value="Chitin_synth_fun"/>
</dbReference>
<dbReference type="PANTHER" id="PTHR22914">
    <property type="entry name" value="CHITIN SYNTHASE"/>
    <property type="match status" value="1"/>
</dbReference>
<dbReference type="PANTHER" id="PTHR22914:SF9">
    <property type="entry name" value="CHITIN SYNTHASE 1"/>
    <property type="match status" value="1"/>
</dbReference>
<dbReference type="Pfam" id="PF01644">
    <property type="entry name" value="Chitin_synth_1"/>
    <property type="match status" value="1"/>
</dbReference>
<name>CHS1_SCHCO</name>
<organism>
    <name type="scientific">Schizophyllum commune</name>
    <name type="common">Split gill fungus</name>
    <dbReference type="NCBI Taxonomy" id="5334"/>
    <lineage>
        <taxon>Eukaryota</taxon>
        <taxon>Fungi</taxon>
        <taxon>Dikarya</taxon>
        <taxon>Basidiomycota</taxon>
        <taxon>Agaricomycotina</taxon>
        <taxon>Agaricomycetes</taxon>
        <taxon>Agaricomycetidae</taxon>
        <taxon>Agaricales</taxon>
        <taxon>Schizophyllaceae</taxon>
        <taxon>Schizophyllum</taxon>
    </lineage>
</organism>
<accession>P30596</accession>
<evidence type="ECO:0000305" key="1"/>